<feature type="chain" id="PRO_0000130246" description="Small ribosomal subunit protein uS3">
    <location>
        <begin position="1"/>
        <end position="229"/>
    </location>
</feature>
<feature type="domain" description="KH type-2" evidence="1">
    <location>
        <begin position="17"/>
        <end position="85"/>
    </location>
</feature>
<feature type="region of interest" description="Disordered" evidence="2">
    <location>
        <begin position="202"/>
        <end position="229"/>
    </location>
</feature>
<feature type="compositionally biased region" description="Low complexity" evidence="2">
    <location>
        <begin position="219"/>
        <end position="229"/>
    </location>
</feature>
<accession>O28360</accession>
<protein>
    <recommendedName>
        <fullName evidence="1">Small ribosomal subunit protein uS3</fullName>
    </recommendedName>
    <alternativeName>
        <fullName evidence="3">30S ribosomal protein S3</fullName>
    </alternativeName>
</protein>
<dbReference type="EMBL" id="AE000782">
    <property type="protein sequence ID" value="AAB89335.1"/>
    <property type="molecule type" value="Genomic_DNA"/>
</dbReference>
<dbReference type="PIR" id="F69489">
    <property type="entry name" value="F69489"/>
</dbReference>
<dbReference type="RefSeq" id="WP_010879412.1">
    <property type="nucleotide sequence ID" value="NC_000917.1"/>
</dbReference>
<dbReference type="SMR" id="O28360"/>
<dbReference type="STRING" id="224325.AF_1919"/>
<dbReference type="PaxDb" id="224325-AF_1919"/>
<dbReference type="EnsemblBacteria" id="AAB89335">
    <property type="protein sequence ID" value="AAB89335"/>
    <property type="gene ID" value="AF_1919"/>
</dbReference>
<dbReference type="KEGG" id="afu:AF_1919"/>
<dbReference type="eggNOG" id="arCOG04097">
    <property type="taxonomic scope" value="Archaea"/>
</dbReference>
<dbReference type="HOGENOM" id="CLU_058591_1_1_2"/>
<dbReference type="OrthoDB" id="9126at2157"/>
<dbReference type="PhylomeDB" id="O28360"/>
<dbReference type="Proteomes" id="UP000002199">
    <property type="component" value="Chromosome"/>
</dbReference>
<dbReference type="GO" id="GO:0022627">
    <property type="term" value="C:cytosolic small ribosomal subunit"/>
    <property type="evidence" value="ECO:0007669"/>
    <property type="project" value="TreeGrafter"/>
</dbReference>
<dbReference type="GO" id="GO:0019843">
    <property type="term" value="F:rRNA binding"/>
    <property type="evidence" value="ECO:0007669"/>
    <property type="project" value="UniProtKB-UniRule"/>
</dbReference>
<dbReference type="GO" id="GO:0003735">
    <property type="term" value="F:structural constituent of ribosome"/>
    <property type="evidence" value="ECO:0007669"/>
    <property type="project" value="InterPro"/>
</dbReference>
<dbReference type="GO" id="GO:0006412">
    <property type="term" value="P:translation"/>
    <property type="evidence" value="ECO:0007669"/>
    <property type="project" value="UniProtKB-UniRule"/>
</dbReference>
<dbReference type="CDD" id="cd02411">
    <property type="entry name" value="KH-II_30S_S3_arch"/>
    <property type="match status" value="1"/>
</dbReference>
<dbReference type="FunFam" id="3.30.300.20:FF:000001">
    <property type="entry name" value="30S ribosomal protein S3"/>
    <property type="match status" value="1"/>
</dbReference>
<dbReference type="Gene3D" id="3.30.300.20">
    <property type="match status" value="1"/>
</dbReference>
<dbReference type="Gene3D" id="3.30.1140.32">
    <property type="entry name" value="Ribosomal protein S3, C-terminal domain"/>
    <property type="match status" value="1"/>
</dbReference>
<dbReference type="HAMAP" id="MF_01309_A">
    <property type="entry name" value="Ribosomal_uS3_A"/>
    <property type="match status" value="1"/>
</dbReference>
<dbReference type="InterPro" id="IPR004087">
    <property type="entry name" value="KH_dom"/>
</dbReference>
<dbReference type="InterPro" id="IPR015946">
    <property type="entry name" value="KH_dom-like_a/b"/>
</dbReference>
<dbReference type="InterPro" id="IPR004044">
    <property type="entry name" value="KH_dom_type_2"/>
</dbReference>
<dbReference type="InterPro" id="IPR009019">
    <property type="entry name" value="KH_sf_prok-type"/>
</dbReference>
<dbReference type="InterPro" id="IPR036419">
    <property type="entry name" value="Ribosomal_S3_C_sf"/>
</dbReference>
<dbReference type="InterPro" id="IPR027488">
    <property type="entry name" value="Ribosomal_uS3_arc"/>
</dbReference>
<dbReference type="InterPro" id="IPR001351">
    <property type="entry name" value="Ribosomal_uS3_C"/>
</dbReference>
<dbReference type="InterPro" id="IPR005703">
    <property type="entry name" value="Ribosomal_uS3_euk/arc"/>
</dbReference>
<dbReference type="NCBIfam" id="NF003219">
    <property type="entry name" value="PRK04191.1"/>
    <property type="match status" value="1"/>
</dbReference>
<dbReference type="NCBIfam" id="TIGR01008">
    <property type="entry name" value="uS3_euk_arch"/>
    <property type="match status" value="1"/>
</dbReference>
<dbReference type="PANTHER" id="PTHR11760">
    <property type="entry name" value="30S/40S RIBOSOMAL PROTEIN S3"/>
    <property type="match status" value="1"/>
</dbReference>
<dbReference type="PANTHER" id="PTHR11760:SF32">
    <property type="entry name" value="SMALL RIBOSOMAL SUBUNIT PROTEIN US3"/>
    <property type="match status" value="1"/>
</dbReference>
<dbReference type="Pfam" id="PF07650">
    <property type="entry name" value="KH_2"/>
    <property type="match status" value="1"/>
</dbReference>
<dbReference type="Pfam" id="PF00189">
    <property type="entry name" value="Ribosomal_S3_C"/>
    <property type="match status" value="1"/>
</dbReference>
<dbReference type="SMART" id="SM00322">
    <property type="entry name" value="KH"/>
    <property type="match status" value="1"/>
</dbReference>
<dbReference type="SUPFAM" id="SSF54814">
    <property type="entry name" value="Prokaryotic type KH domain (KH-domain type II)"/>
    <property type="match status" value="1"/>
</dbReference>
<dbReference type="SUPFAM" id="SSF54821">
    <property type="entry name" value="Ribosomal protein S3 C-terminal domain"/>
    <property type="match status" value="1"/>
</dbReference>
<dbReference type="PROSITE" id="PS50823">
    <property type="entry name" value="KH_TYPE_2"/>
    <property type="match status" value="1"/>
</dbReference>
<gene>
    <name evidence="1" type="primary">rps3</name>
    <name type="ordered locus">AF_1919</name>
</gene>
<evidence type="ECO:0000255" key="1">
    <source>
        <dbReference type="HAMAP-Rule" id="MF_01309"/>
    </source>
</evidence>
<evidence type="ECO:0000256" key="2">
    <source>
        <dbReference type="SAM" id="MobiDB-lite"/>
    </source>
</evidence>
<evidence type="ECO:0000305" key="3"/>
<sequence length="229" mass="25259">MAVERKFVQERLKKLMVKEWIKDEVRSAGFGGVDILRTPLGTQVTLFVERPGLVIGKGGRRIKALTEKLKDFGIENPQVSVDEVEKPEFNAQLMASLLARALERGWYFRRAGYRFLYRIMEAGAKGCEIEISGKLVSERARTEKFVAGTIVHTGDPAESMVQKGFDIAIKKLGVLGVSVRIIPPDVTLPDEFEVKDVNIEHLRGESGEDEGDKGDEQGGEAQEAEGAGA</sequence>
<reference key="1">
    <citation type="journal article" date="1997" name="Nature">
        <title>The complete genome sequence of the hyperthermophilic, sulphate-reducing archaeon Archaeoglobus fulgidus.</title>
        <authorList>
            <person name="Klenk H.-P."/>
            <person name="Clayton R.A."/>
            <person name="Tomb J.-F."/>
            <person name="White O."/>
            <person name="Nelson K.E."/>
            <person name="Ketchum K.A."/>
            <person name="Dodson R.J."/>
            <person name="Gwinn M.L."/>
            <person name="Hickey E.K."/>
            <person name="Peterson J.D."/>
            <person name="Richardson D.L."/>
            <person name="Kerlavage A.R."/>
            <person name="Graham D.E."/>
            <person name="Kyrpides N.C."/>
            <person name="Fleischmann R.D."/>
            <person name="Quackenbush J."/>
            <person name="Lee N.H."/>
            <person name="Sutton G.G."/>
            <person name="Gill S.R."/>
            <person name="Kirkness E.F."/>
            <person name="Dougherty B.A."/>
            <person name="McKenney K."/>
            <person name="Adams M.D."/>
            <person name="Loftus B.J."/>
            <person name="Peterson S.N."/>
            <person name="Reich C.I."/>
            <person name="McNeil L.K."/>
            <person name="Badger J.H."/>
            <person name="Glodek A."/>
            <person name="Zhou L."/>
            <person name="Overbeek R."/>
            <person name="Gocayne J.D."/>
            <person name="Weidman J.F."/>
            <person name="McDonald L.A."/>
            <person name="Utterback T.R."/>
            <person name="Cotton M.D."/>
            <person name="Spriggs T."/>
            <person name="Artiach P."/>
            <person name="Kaine B.P."/>
            <person name="Sykes S.M."/>
            <person name="Sadow P.W."/>
            <person name="D'Andrea K.P."/>
            <person name="Bowman C."/>
            <person name="Fujii C."/>
            <person name="Garland S.A."/>
            <person name="Mason T.M."/>
            <person name="Olsen G.J."/>
            <person name="Fraser C.M."/>
            <person name="Smith H.O."/>
            <person name="Woese C.R."/>
            <person name="Venter J.C."/>
        </authorList>
    </citation>
    <scope>NUCLEOTIDE SEQUENCE [LARGE SCALE GENOMIC DNA]</scope>
    <source>
        <strain>ATCC 49558 / DSM 4304 / JCM 9628 / NBRC 100126 / VC-16</strain>
    </source>
</reference>
<keyword id="KW-1185">Reference proteome</keyword>
<keyword id="KW-0687">Ribonucleoprotein</keyword>
<keyword id="KW-0689">Ribosomal protein</keyword>
<keyword id="KW-0694">RNA-binding</keyword>
<keyword id="KW-0699">rRNA-binding</keyword>
<comment type="function">
    <text evidence="1">Binds the lower part of the 30S subunit head.</text>
</comment>
<comment type="subunit">
    <text evidence="1">Part of the 30S ribosomal subunit.</text>
</comment>
<comment type="similarity">
    <text evidence="1">Belongs to the universal ribosomal protein uS3 family.</text>
</comment>
<organism>
    <name type="scientific">Archaeoglobus fulgidus (strain ATCC 49558 / DSM 4304 / JCM 9628 / NBRC 100126 / VC-16)</name>
    <dbReference type="NCBI Taxonomy" id="224325"/>
    <lineage>
        <taxon>Archaea</taxon>
        <taxon>Methanobacteriati</taxon>
        <taxon>Methanobacteriota</taxon>
        <taxon>Archaeoglobi</taxon>
        <taxon>Archaeoglobales</taxon>
        <taxon>Archaeoglobaceae</taxon>
        <taxon>Archaeoglobus</taxon>
    </lineage>
</organism>
<proteinExistence type="inferred from homology"/>
<name>RS3_ARCFU</name>